<protein>
    <recommendedName>
        <fullName evidence="1">Probable endonuclease 4</fullName>
        <ecNumber evidence="1">3.1.21.2</ecNumber>
    </recommendedName>
    <alternativeName>
        <fullName evidence="1">Endodeoxyribonuclease IV</fullName>
    </alternativeName>
    <alternativeName>
        <fullName evidence="1">Endonuclease IV</fullName>
    </alternativeName>
</protein>
<dbReference type="EC" id="3.1.21.2" evidence="1"/>
<dbReference type="EMBL" id="CP001164">
    <property type="protein sequence ID" value="ACI39459.1"/>
    <property type="molecule type" value="Genomic_DNA"/>
</dbReference>
<dbReference type="RefSeq" id="WP_000873894.1">
    <property type="nucleotide sequence ID" value="NC_011353.1"/>
</dbReference>
<dbReference type="SMR" id="B5YWV0"/>
<dbReference type="KEGG" id="ecf:ECH74115_3295"/>
<dbReference type="HOGENOM" id="CLU_025885_0_4_6"/>
<dbReference type="GO" id="GO:0008833">
    <property type="term" value="F:deoxyribonuclease IV (phage-T4-induced) activity"/>
    <property type="evidence" value="ECO:0007669"/>
    <property type="project" value="UniProtKB-UniRule"/>
</dbReference>
<dbReference type="GO" id="GO:0003677">
    <property type="term" value="F:DNA binding"/>
    <property type="evidence" value="ECO:0007669"/>
    <property type="project" value="InterPro"/>
</dbReference>
<dbReference type="GO" id="GO:0003906">
    <property type="term" value="F:DNA-(apurinic or apyrimidinic site) endonuclease activity"/>
    <property type="evidence" value="ECO:0007669"/>
    <property type="project" value="TreeGrafter"/>
</dbReference>
<dbReference type="GO" id="GO:0008081">
    <property type="term" value="F:phosphoric diester hydrolase activity"/>
    <property type="evidence" value="ECO:0007669"/>
    <property type="project" value="TreeGrafter"/>
</dbReference>
<dbReference type="GO" id="GO:0008270">
    <property type="term" value="F:zinc ion binding"/>
    <property type="evidence" value="ECO:0007669"/>
    <property type="project" value="UniProtKB-UniRule"/>
</dbReference>
<dbReference type="GO" id="GO:0006284">
    <property type="term" value="P:base-excision repair"/>
    <property type="evidence" value="ECO:0007669"/>
    <property type="project" value="TreeGrafter"/>
</dbReference>
<dbReference type="CDD" id="cd00019">
    <property type="entry name" value="AP2Ec"/>
    <property type="match status" value="1"/>
</dbReference>
<dbReference type="FunFam" id="3.20.20.150:FF:000001">
    <property type="entry name" value="Probable endonuclease 4"/>
    <property type="match status" value="1"/>
</dbReference>
<dbReference type="Gene3D" id="3.20.20.150">
    <property type="entry name" value="Divalent-metal-dependent TIM barrel enzymes"/>
    <property type="match status" value="1"/>
</dbReference>
<dbReference type="HAMAP" id="MF_00152">
    <property type="entry name" value="Nfo"/>
    <property type="match status" value="1"/>
</dbReference>
<dbReference type="InterPro" id="IPR001719">
    <property type="entry name" value="AP_endonuc_2"/>
</dbReference>
<dbReference type="InterPro" id="IPR018246">
    <property type="entry name" value="AP_endonuc_F2_Zn_BS"/>
</dbReference>
<dbReference type="InterPro" id="IPR036237">
    <property type="entry name" value="Xyl_isomerase-like_sf"/>
</dbReference>
<dbReference type="InterPro" id="IPR013022">
    <property type="entry name" value="Xyl_isomerase-like_TIM-brl"/>
</dbReference>
<dbReference type="NCBIfam" id="TIGR00587">
    <property type="entry name" value="nfo"/>
    <property type="match status" value="1"/>
</dbReference>
<dbReference type="NCBIfam" id="NF002199">
    <property type="entry name" value="PRK01060.1-4"/>
    <property type="match status" value="1"/>
</dbReference>
<dbReference type="PANTHER" id="PTHR21445:SF0">
    <property type="entry name" value="APURINIC-APYRIMIDINIC ENDONUCLEASE"/>
    <property type="match status" value="1"/>
</dbReference>
<dbReference type="PANTHER" id="PTHR21445">
    <property type="entry name" value="ENDONUCLEASE IV ENDODEOXYRIBONUCLEASE IV"/>
    <property type="match status" value="1"/>
</dbReference>
<dbReference type="Pfam" id="PF01261">
    <property type="entry name" value="AP_endonuc_2"/>
    <property type="match status" value="1"/>
</dbReference>
<dbReference type="SMART" id="SM00518">
    <property type="entry name" value="AP2Ec"/>
    <property type="match status" value="1"/>
</dbReference>
<dbReference type="SUPFAM" id="SSF51658">
    <property type="entry name" value="Xylose isomerase-like"/>
    <property type="match status" value="1"/>
</dbReference>
<dbReference type="PROSITE" id="PS00729">
    <property type="entry name" value="AP_NUCLEASE_F2_1"/>
    <property type="match status" value="1"/>
</dbReference>
<dbReference type="PROSITE" id="PS00730">
    <property type="entry name" value="AP_NUCLEASE_F2_2"/>
    <property type="match status" value="1"/>
</dbReference>
<dbReference type="PROSITE" id="PS00731">
    <property type="entry name" value="AP_NUCLEASE_F2_3"/>
    <property type="match status" value="1"/>
</dbReference>
<dbReference type="PROSITE" id="PS51432">
    <property type="entry name" value="AP_NUCLEASE_F2_4"/>
    <property type="match status" value="1"/>
</dbReference>
<organism>
    <name type="scientific">Escherichia coli O157:H7 (strain EC4115 / EHEC)</name>
    <dbReference type="NCBI Taxonomy" id="444450"/>
    <lineage>
        <taxon>Bacteria</taxon>
        <taxon>Pseudomonadati</taxon>
        <taxon>Pseudomonadota</taxon>
        <taxon>Gammaproteobacteria</taxon>
        <taxon>Enterobacterales</taxon>
        <taxon>Enterobacteriaceae</taxon>
        <taxon>Escherichia</taxon>
    </lineage>
</organism>
<sequence>MKYIGAHVSAAGGLANAAIRAAEIDATAFALFTKNQRQWRAAPLTTQTIDEFKAACEKYHYTSAQILPHDSYLINLGHPVTEALEKSRDAFIDEMQRCEQLGLSLLNFHPGSHLMQISEEDCLARIAESINIALDKTQGVTAVIENTAGQGSNLGFKFEHLAAIIDGVEDKSRVGVCIDTCHAFAAGYDLRTPAECEKTFADFARTVGFKYLRGMHLNDAKSTFGSRVDRHHSLGEGNIGHDAFRWIMQDDRFDGIPLILETINPDIWAEEIAWLKAQQTEKAVA</sequence>
<feature type="chain" id="PRO_1000096879" description="Probable endonuclease 4">
    <location>
        <begin position="1"/>
        <end position="285"/>
    </location>
</feature>
<feature type="binding site" evidence="1">
    <location>
        <position position="69"/>
    </location>
    <ligand>
        <name>Zn(2+)</name>
        <dbReference type="ChEBI" id="CHEBI:29105"/>
        <label>1</label>
    </ligand>
</feature>
<feature type="binding site" evidence="1">
    <location>
        <position position="109"/>
    </location>
    <ligand>
        <name>Zn(2+)</name>
        <dbReference type="ChEBI" id="CHEBI:29105"/>
        <label>1</label>
    </ligand>
</feature>
<feature type="binding site" evidence="1">
    <location>
        <position position="145"/>
    </location>
    <ligand>
        <name>Zn(2+)</name>
        <dbReference type="ChEBI" id="CHEBI:29105"/>
        <label>1</label>
    </ligand>
</feature>
<feature type="binding site" evidence="1">
    <location>
        <position position="145"/>
    </location>
    <ligand>
        <name>Zn(2+)</name>
        <dbReference type="ChEBI" id="CHEBI:29105"/>
        <label>2</label>
    </ligand>
</feature>
<feature type="binding site" evidence="1">
    <location>
        <position position="179"/>
    </location>
    <ligand>
        <name>Zn(2+)</name>
        <dbReference type="ChEBI" id="CHEBI:29105"/>
        <label>2</label>
    </ligand>
</feature>
<feature type="binding site" evidence="1">
    <location>
        <position position="182"/>
    </location>
    <ligand>
        <name>Zn(2+)</name>
        <dbReference type="ChEBI" id="CHEBI:29105"/>
        <label>3</label>
    </ligand>
</feature>
<feature type="binding site" evidence="1">
    <location>
        <position position="216"/>
    </location>
    <ligand>
        <name>Zn(2+)</name>
        <dbReference type="ChEBI" id="CHEBI:29105"/>
        <label>2</label>
    </ligand>
</feature>
<feature type="binding site" evidence="1">
    <location>
        <position position="229"/>
    </location>
    <ligand>
        <name>Zn(2+)</name>
        <dbReference type="ChEBI" id="CHEBI:29105"/>
        <label>3</label>
    </ligand>
</feature>
<feature type="binding site" evidence="1">
    <location>
        <position position="231"/>
    </location>
    <ligand>
        <name>Zn(2+)</name>
        <dbReference type="ChEBI" id="CHEBI:29105"/>
        <label>3</label>
    </ligand>
</feature>
<feature type="binding site" evidence="1">
    <location>
        <position position="261"/>
    </location>
    <ligand>
        <name>Zn(2+)</name>
        <dbReference type="ChEBI" id="CHEBI:29105"/>
        <label>2</label>
    </ligand>
</feature>
<keyword id="KW-0227">DNA damage</keyword>
<keyword id="KW-0234">DNA repair</keyword>
<keyword id="KW-0255">Endonuclease</keyword>
<keyword id="KW-0378">Hydrolase</keyword>
<keyword id="KW-0479">Metal-binding</keyword>
<keyword id="KW-0540">Nuclease</keyword>
<keyword id="KW-0862">Zinc</keyword>
<proteinExistence type="inferred from homology"/>
<comment type="function">
    <text evidence="1">Endonuclease IV plays a role in DNA repair. It cleaves phosphodiester bonds at apurinic or apyrimidinic (AP) sites, generating a 3'-hydroxyl group and a 5'-terminal sugar phosphate.</text>
</comment>
<comment type="catalytic activity">
    <reaction evidence="1">
        <text>Endonucleolytic cleavage to 5'-phosphooligonucleotide end-products.</text>
        <dbReference type="EC" id="3.1.21.2"/>
    </reaction>
</comment>
<comment type="cofactor">
    <cofactor evidence="1">
        <name>Zn(2+)</name>
        <dbReference type="ChEBI" id="CHEBI:29105"/>
    </cofactor>
    <text evidence="1">Binds 3 Zn(2+) ions.</text>
</comment>
<comment type="similarity">
    <text evidence="1">Belongs to the AP endonuclease 2 family.</text>
</comment>
<name>END4_ECO5E</name>
<reference key="1">
    <citation type="journal article" date="2011" name="Proc. Natl. Acad. Sci. U.S.A.">
        <title>Genomic anatomy of Escherichia coli O157:H7 outbreaks.</title>
        <authorList>
            <person name="Eppinger M."/>
            <person name="Mammel M.K."/>
            <person name="Leclerc J.E."/>
            <person name="Ravel J."/>
            <person name="Cebula T.A."/>
        </authorList>
    </citation>
    <scope>NUCLEOTIDE SEQUENCE [LARGE SCALE GENOMIC DNA]</scope>
    <source>
        <strain>EC4115 / EHEC</strain>
    </source>
</reference>
<accession>B5YWV0</accession>
<evidence type="ECO:0000255" key="1">
    <source>
        <dbReference type="HAMAP-Rule" id="MF_00152"/>
    </source>
</evidence>
<gene>
    <name evidence="1" type="primary">nfo</name>
    <name type="ordered locus">ECH74115_3295</name>
</gene>